<evidence type="ECO:0000255" key="1">
    <source>
        <dbReference type="HAMAP-Rule" id="MF_00006"/>
    </source>
</evidence>
<organism>
    <name type="scientific">Laribacter hongkongensis (strain HLHK9)</name>
    <dbReference type="NCBI Taxonomy" id="557598"/>
    <lineage>
        <taxon>Bacteria</taxon>
        <taxon>Pseudomonadati</taxon>
        <taxon>Pseudomonadota</taxon>
        <taxon>Betaproteobacteria</taxon>
        <taxon>Neisseriales</taxon>
        <taxon>Aquaspirillaceae</taxon>
        <taxon>Laribacter</taxon>
    </lineage>
</organism>
<reference key="1">
    <citation type="journal article" date="2009" name="PLoS Genet.">
        <title>The complete genome and proteome of Laribacter hongkongensis reveal potential mechanisms for adaptations to different temperatures and habitats.</title>
        <authorList>
            <person name="Woo P.C.Y."/>
            <person name="Lau S.K.P."/>
            <person name="Tse H."/>
            <person name="Teng J.L.L."/>
            <person name="Curreem S.O."/>
            <person name="Tsang A.K.L."/>
            <person name="Fan R.Y.Y."/>
            <person name="Wong G.K.M."/>
            <person name="Huang Y."/>
            <person name="Loman N.J."/>
            <person name="Snyder L.A.S."/>
            <person name="Cai J.J."/>
            <person name="Huang J.-D."/>
            <person name="Mak W."/>
            <person name="Pallen M.J."/>
            <person name="Lok S."/>
            <person name="Yuen K.-Y."/>
        </authorList>
    </citation>
    <scope>NUCLEOTIDE SEQUENCE [LARGE SCALE GENOMIC DNA]</scope>
    <source>
        <strain>HLHK9</strain>
    </source>
</reference>
<proteinExistence type="inferred from homology"/>
<comment type="catalytic activity">
    <reaction evidence="1">
        <text>2-(N(omega)-L-arginino)succinate = fumarate + L-arginine</text>
        <dbReference type="Rhea" id="RHEA:24020"/>
        <dbReference type="ChEBI" id="CHEBI:29806"/>
        <dbReference type="ChEBI" id="CHEBI:32682"/>
        <dbReference type="ChEBI" id="CHEBI:57472"/>
        <dbReference type="EC" id="4.3.2.1"/>
    </reaction>
</comment>
<comment type="pathway">
    <text evidence="1">Amino-acid biosynthesis; L-arginine biosynthesis; L-arginine from L-ornithine and carbamoyl phosphate: step 3/3.</text>
</comment>
<comment type="subcellular location">
    <subcellularLocation>
        <location evidence="1">Cytoplasm</location>
    </subcellularLocation>
</comment>
<comment type="similarity">
    <text evidence="1">Belongs to the lyase 1 family. Argininosuccinate lyase subfamily.</text>
</comment>
<feature type="chain" id="PRO_1000116328" description="Argininosuccinate lyase">
    <location>
        <begin position="1"/>
        <end position="461"/>
    </location>
</feature>
<sequence>MNDNKAWSGRFAEPVAELVKTYTASVDFDRRMAEFDIQGSLAHAQMLTRAGVLSETDLDAIRSGMHTILEDIRAGRFEWSVDLEDVHMNVEKRLTDRIGDAGKRLHTGRSRNDQVATGIRLYLRDAIDRIVGFVRGLQAALLDLAEPNAATVMPGFTHLQVAQPVTFGHHLLAYVEMLGRDAERMQDCRKRVNRLPLGAAALAGTTYPIDRHYTAELLGFDDVCHNSLDAVSDRDFAIEFTAAASLVMTHLSRLSEELILWMSPRVGFIDIADRFCTGSSIMPQKKNPDVPELVRGKAGRVTGHLMALLMLMKAQPLAYNKDNQEDKEPLFDTVDTLIDTLRIYADMMRGITVRPEAMRAAVLQGFATATDLADYLVKKGVPFRDSHEIVARTVKLAEVQGCDIADLPLDELREFSELIEADVYDVLTPEGSLAQRNHVGGTAPEQVREQIARWRQRLAHA</sequence>
<name>ARLY_LARHH</name>
<keyword id="KW-0028">Amino-acid biosynthesis</keyword>
<keyword id="KW-0055">Arginine biosynthesis</keyword>
<keyword id="KW-0963">Cytoplasm</keyword>
<keyword id="KW-0456">Lyase</keyword>
<keyword id="KW-1185">Reference proteome</keyword>
<dbReference type="EC" id="4.3.2.1" evidence="1"/>
<dbReference type="EMBL" id="CP001154">
    <property type="protein sequence ID" value="ACO76100.1"/>
    <property type="molecule type" value="Genomic_DNA"/>
</dbReference>
<dbReference type="RefSeq" id="WP_012698563.1">
    <property type="nucleotide sequence ID" value="NC_012559.1"/>
</dbReference>
<dbReference type="SMR" id="C1D665"/>
<dbReference type="STRING" id="557598.LHK_03122"/>
<dbReference type="GeneID" id="75108319"/>
<dbReference type="KEGG" id="lhk:LHK_03122"/>
<dbReference type="eggNOG" id="COG0165">
    <property type="taxonomic scope" value="Bacteria"/>
</dbReference>
<dbReference type="HOGENOM" id="CLU_027272_2_3_4"/>
<dbReference type="UniPathway" id="UPA00068">
    <property type="reaction ID" value="UER00114"/>
</dbReference>
<dbReference type="Proteomes" id="UP000002010">
    <property type="component" value="Chromosome"/>
</dbReference>
<dbReference type="GO" id="GO:0005829">
    <property type="term" value="C:cytosol"/>
    <property type="evidence" value="ECO:0007669"/>
    <property type="project" value="TreeGrafter"/>
</dbReference>
<dbReference type="GO" id="GO:0004056">
    <property type="term" value="F:argininosuccinate lyase activity"/>
    <property type="evidence" value="ECO:0007669"/>
    <property type="project" value="UniProtKB-UniRule"/>
</dbReference>
<dbReference type="GO" id="GO:0042450">
    <property type="term" value="P:arginine biosynthetic process via ornithine"/>
    <property type="evidence" value="ECO:0007669"/>
    <property type="project" value="InterPro"/>
</dbReference>
<dbReference type="GO" id="GO:0006526">
    <property type="term" value="P:L-arginine biosynthetic process"/>
    <property type="evidence" value="ECO:0007669"/>
    <property type="project" value="UniProtKB-UniRule"/>
</dbReference>
<dbReference type="CDD" id="cd01359">
    <property type="entry name" value="Argininosuccinate_lyase"/>
    <property type="match status" value="1"/>
</dbReference>
<dbReference type="FunFam" id="1.10.275.10:FF:000002">
    <property type="entry name" value="Argininosuccinate lyase"/>
    <property type="match status" value="1"/>
</dbReference>
<dbReference type="FunFam" id="1.10.40.30:FF:000001">
    <property type="entry name" value="Argininosuccinate lyase"/>
    <property type="match status" value="1"/>
</dbReference>
<dbReference type="FunFam" id="1.20.200.10:FF:000015">
    <property type="entry name" value="argininosuccinate lyase isoform X2"/>
    <property type="match status" value="1"/>
</dbReference>
<dbReference type="Gene3D" id="1.10.40.30">
    <property type="entry name" value="Fumarase/aspartase (C-terminal domain)"/>
    <property type="match status" value="1"/>
</dbReference>
<dbReference type="Gene3D" id="1.20.200.10">
    <property type="entry name" value="Fumarase/aspartase (Central domain)"/>
    <property type="match status" value="1"/>
</dbReference>
<dbReference type="Gene3D" id="1.10.275.10">
    <property type="entry name" value="Fumarase/aspartase (N-terminal domain)"/>
    <property type="match status" value="1"/>
</dbReference>
<dbReference type="HAMAP" id="MF_00006">
    <property type="entry name" value="Arg_succ_lyase"/>
    <property type="match status" value="1"/>
</dbReference>
<dbReference type="InterPro" id="IPR029419">
    <property type="entry name" value="Arg_succ_lyase_C"/>
</dbReference>
<dbReference type="InterPro" id="IPR009049">
    <property type="entry name" value="Argininosuccinate_lyase"/>
</dbReference>
<dbReference type="InterPro" id="IPR024083">
    <property type="entry name" value="Fumarase/histidase_N"/>
</dbReference>
<dbReference type="InterPro" id="IPR020557">
    <property type="entry name" value="Fumarate_lyase_CS"/>
</dbReference>
<dbReference type="InterPro" id="IPR000362">
    <property type="entry name" value="Fumarate_lyase_fam"/>
</dbReference>
<dbReference type="InterPro" id="IPR022761">
    <property type="entry name" value="Fumarate_lyase_N"/>
</dbReference>
<dbReference type="InterPro" id="IPR008948">
    <property type="entry name" value="L-Aspartase-like"/>
</dbReference>
<dbReference type="NCBIfam" id="TIGR00838">
    <property type="entry name" value="argH"/>
    <property type="match status" value="1"/>
</dbReference>
<dbReference type="PANTHER" id="PTHR43814">
    <property type="entry name" value="ARGININOSUCCINATE LYASE"/>
    <property type="match status" value="1"/>
</dbReference>
<dbReference type="PANTHER" id="PTHR43814:SF1">
    <property type="entry name" value="ARGININOSUCCINATE LYASE"/>
    <property type="match status" value="1"/>
</dbReference>
<dbReference type="Pfam" id="PF14698">
    <property type="entry name" value="ASL_C2"/>
    <property type="match status" value="1"/>
</dbReference>
<dbReference type="Pfam" id="PF00206">
    <property type="entry name" value="Lyase_1"/>
    <property type="match status" value="1"/>
</dbReference>
<dbReference type="PRINTS" id="PR00145">
    <property type="entry name" value="ARGSUCLYASE"/>
</dbReference>
<dbReference type="PRINTS" id="PR00149">
    <property type="entry name" value="FUMRATELYASE"/>
</dbReference>
<dbReference type="SUPFAM" id="SSF48557">
    <property type="entry name" value="L-aspartase-like"/>
    <property type="match status" value="1"/>
</dbReference>
<dbReference type="PROSITE" id="PS00163">
    <property type="entry name" value="FUMARATE_LYASES"/>
    <property type="match status" value="1"/>
</dbReference>
<accession>C1D665</accession>
<gene>
    <name evidence="1" type="primary">argH</name>
    <name type="ordered locus">LHK_03122</name>
</gene>
<protein>
    <recommendedName>
        <fullName evidence="1">Argininosuccinate lyase</fullName>
        <shortName evidence="1">ASAL</shortName>
        <ecNumber evidence="1">4.3.2.1</ecNumber>
    </recommendedName>
    <alternativeName>
        <fullName evidence="1">Arginosuccinase</fullName>
    </alternativeName>
</protein>